<feature type="chain" id="PRO_0000437180" description="Fructose-1,6-bisphosphate aldolase/phosphatase">
    <location>
        <begin position="1"/>
        <end position="387"/>
    </location>
</feature>
<feature type="active site" description="Proton acceptor; for FBP phosphatase activity" evidence="1">
    <location>
        <position position="13"/>
    </location>
</feature>
<feature type="active site" description="Proton donor/acceptor; for FBP aldolase activity" evidence="1">
    <location>
        <position position="229"/>
    </location>
</feature>
<feature type="active site" description="Schiff-base intermediate with DHAP; for FBP aldolase activity" evidence="1">
    <location>
        <position position="232"/>
    </location>
</feature>
<feature type="binding site" evidence="1">
    <location>
        <position position="13"/>
    </location>
    <ligand>
        <name>Mg(2+)</name>
        <dbReference type="ChEBI" id="CHEBI:18420"/>
        <label>1</label>
    </ligand>
</feature>
<feature type="binding site" description="in other chain" evidence="1">
    <location>
        <position position="20"/>
    </location>
    <ligand>
        <name>beta-D-fructose 1,6-bisphosphate</name>
        <dbReference type="ChEBI" id="CHEBI:32966"/>
        <note>ligand shared between dimeric partners</note>
    </ligand>
</feature>
<feature type="binding site" evidence="1">
    <location>
        <position position="20"/>
    </location>
    <ligand>
        <name>dihydroxyacetone phosphate</name>
        <dbReference type="ChEBI" id="CHEBI:57642"/>
    </ligand>
</feature>
<feature type="binding site" evidence="1">
    <location>
        <position position="20"/>
    </location>
    <ligand>
        <name>Mg(2+)</name>
        <dbReference type="ChEBI" id="CHEBI:18420"/>
        <label>1</label>
    </ligand>
</feature>
<feature type="binding site" evidence="1">
    <location>
        <position position="54"/>
    </location>
    <ligand>
        <name>Mg(2+)</name>
        <dbReference type="ChEBI" id="CHEBI:18420"/>
        <label>1</label>
    </ligand>
</feature>
<feature type="binding site" evidence="1">
    <location>
        <position position="54"/>
    </location>
    <ligand>
        <name>Mg(2+)</name>
        <dbReference type="ChEBI" id="CHEBI:18420"/>
        <label>2</label>
    </ligand>
</feature>
<feature type="binding site" evidence="1">
    <location>
        <position position="55"/>
    </location>
    <ligand>
        <name>Mg(2+)</name>
        <dbReference type="ChEBI" id="CHEBI:18420"/>
        <label>2</label>
    </ligand>
</feature>
<feature type="binding site" description="in other chain" evidence="1">
    <location>
        <position position="92"/>
    </location>
    <ligand>
        <name>beta-D-fructose 1,6-bisphosphate</name>
        <dbReference type="ChEBI" id="CHEBI:32966"/>
        <note>ligand shared between dimeric partners</note>
    </ligand>
</feature>
<feature type="binding site" evidence="1">
    <location>
        <position position="96"/>
    </location>
    <ligand>
        <name>Mg(2+)</name>
        <dbReference type="ChEBI" id="CHEBI:18420"/>
        <label>1</label>
    </ligand>
</feature>
<feature type="binding site" description="in other chain" evidence="1">
    <location>
        <begin position="105"/>
        <end position="106"/>
    </location>
    <ligand>
        <name>beta-D-fructose 1,6-bisphosphate</name>
        <dbReference type="ChEBI" id="CHEBI:32966"/>
        <note>ligand shared between dimeric partners</note>
    </ligand>
</feature>
<feature type="binding site" evidence="1">
    <location>
        <position position="133"/>
    </location>
    <ligand>
        <name>Mg(2+)</name>
        <dbReference type="ChEBI" id="CHEBI:18420"/>
        <label>2</label>
    </ligand>
</feature>
<feature type="binding site" description="in other chain" evidence="1">
    <location>
        <position position="134"/>
    </location>
    <ligand>
        <name>beta-D-fructose 1,6-bisphosphate</name>
        <dbReference type="ChEBI" id="CHEBI:32966"/>
        <note>ligand shared between dimeric partners</note>
    </ligand>
</feature>
<feature type="binding site" evidence="1">
    <location>
        <position position="134"/>
    </location>
    <ligand>
        <name>dihydroxyacetone phosphate</name>
        <dbReference type="ChEBI" id="CHEBI:57642"/>
    </ligand>
</feature>
<feature type="binding site" evidence="1">
    <location>
        <position position="232"/>
    </location>
    <ligand>
        <name>Mg(2+)</name>
        <dbReference type="ChEBI" id="CHEBI:18420"/>
        <label>3</label>
    </ligand>
</feature>
<feature type="binding site" evidence="1">
    <location>
        <position position="233"/>
    </location>
    <ligand>
        <name>Mg(2+)</name>
        <dbReference type="ChEBI" id="CHEBI:18420"/>
        <label>3</label>
    </ligand>
</feature>
<feature type="binding site" evidence="1">
    <location>
        <position position="233"/>
    </location>
    <ligand>
        <name>Mg(2+)</name>
        <dbReference type="ChEBI" id="CHEBI:18420"/>
        <label>4</label>
    </ligand>
</feature>
<feature type="binding site" evidence="1">
    <location>
        <position position="234"/>
    </location>
    <ligand>
        <name>Mg(2+)</name>
        <dbReference type="ChEBI" id="CHEBI:18420"/>
        <label>2</label>
    </ligand>
</feature>
<feature type="binding site" evidence="1">
    <location>
        <position position="234"/>
    </location>
    <ligand>
        <name>Mg(2+)</name>
        <dbReference type="ChEBI" id="CHEBI:18420"/>
        <label>3</label>
    </ligand>
</feature>
<feature type="binding site" evidence="1">
    <location>
        <begin position="242"/>
        <end position="243"/>
    </location>
    <ligand>
        <name>beta-D-fructose 1,6-bisphosphate</name>
        <dbReference type="ChEBI" id="CHEBI:32966"/>
        <note>ligand shared between dimeric partners</note>
    </ligand>
</feature>
<feature type="binding site" description="in other chain" evidence="1">
    <location>
        <position position="266"/>
    </location>
    <ligand>
        <name>beta-D-fructose 1,6-bisphosphate</name>
        <dbReference type="ChEBI" id="CHEBI:32966"/>
        <note>ligand shared between dimeric partners</note>
    </ligand>
</feature>
<feature type="binding site" evidence="1">
    <location>
        <position position="266"/>
    </location>
    <ligand>
        <name>dihydroxyacetone phosphate</name>
        <dbReference type="ChEBI" id="CHEBI:57642"/>
    </ligand>
</feature>
<feature type="binding site" description="in other chain" evidence="1">
    <location>
        <position position="287"/>
    </location>
    <ligand>
        <name>beta-D-fructose 1,6-bisphosphate</name>
        <dbReference type="ChEBI" id="CHEBI:32966"/>
        <note>ligand shared between dimeric partners</note>
    </ligand>
</feature>
<feature type="binding site" evidence="1">
    <location>
        <position position="287"/>
    </location>
    <ligand>
        <name>dihydroxyacetone phosphate</name>
        <dbReference type="ChEBI" id="CHEBI:57642"/>
    </ligand>
</feature>
<feature type="binding site" description="in other chain" evidence="1">
    <location>
        <position position="348"/>
    </location>
    <ligand>
        <name>beta-D-fructose 1,6-bisphosphate</name>
        <dbReference type="ChEBI" id="CHEBI:32966"/>
        <note>ligand shared between dimeric partners</note>
    </ligand>
</feature>
<dbReference type="EC" id="3.1.3.11" evidence="3"/>
<dbReference type="EC" id="4.1.2.13" evidence="3"/>
<dbReference type="EMBL" id="CP000816">
    <property type="protein sequence ID" value="ABU81546.1"/>
    <property type="molecule type" value="Genomic_DNA"/>
</dbReference>
<dbReference type="RefSeq" id="WP_011998398.1">
    <property type="nucleotide sequence ID" value="NC_009776.1"/>
</dbReference>
<dbReference type="SMR" id="A8A9E4"/>
<dbReference type="STRING" id="453591.Igni_0363"/>
<dbReference type="GeneID" id="5563123"/>
<dbReference type="KEGG" id="iho:Igni_0363"/>
<dbReference type="eggNOG" id="arCOG04180">
    <property type="taxonomic scope" value="Archaea"/>
</dbReference>
<dbReference type="HOGENOM" id="CLU_041630_0_0_2"/>
<dbReference type="OrthoDB" id="5829at2157"/>
<dbReference type="PhylomeDB" id="A8A9E4"/>
<dbReference type="BioCyc" id="MetaCyc:MONOMER-124174"/>
<dbReference type="UniPathway" id="UPA00138"/>
<dbReference type="Proteomes" id="UP000000262">
    <property type="component" value="Chromosome"/>
</dbReference>
<dbReference type="GO" id="GO:0042132">
    <property type="term" value="F:fructose 1,6-bisphosphate 1-phosphatase activity"/>
    <property type="evidence" value="ECO:0007669"/>
    <property type="project" value="UniProtKB-UniRule"/>
</dbReference>
<dbReference type="GO" id="GO:0004332">
    <property type="term" value="F:fructose-bisphosphate aldolase activity"/>
    <property type="evidence" value="ECO:0007669"/>
    <property type="project" value="UniProtKB-UniRule"/>
</dbReference>
<dbReference type="GO" id="GO:0000287">
    <property type="term" value="F:magnesium ion binding"/>
    <property type="evidence" value="ECO:0007669"/>
    <property type="project" value="UniProtKB-UniRule"/>
</dbReference>
<dbReference type="GO" id="GO:0006094">
    <property type="term" value="P:gluconeogenesis"/>
    <property type="evidence" value="ECO:0007669"/>
    <property type="project" value="UniProtKB-UniRule"/>
</dbReference>
<dbReference type="HAMAP" id="MF_02067">
    <property type="entry name" value="FBP_aldolase_phosphatase"/>
    <property type="match status" value="1"/>
</dbReference>
<dbReference type="InterPro" id="IPR002803">
    <property type="entry name" value="FBPase_V"/>
</dbReference>
<dbReference type="InterPro" id="IPR036076">
    <property type="entry name" value="FBPase_V_sf"/>
</dbReference>
<dbReference type="NCBIfam" id="NF041126">
    <property type="entry name" value="FBP_aldo_phos"/>
    <property type="match status" value="1"/>
</dbReference>
<dbReference type="PANTHER" id="PTHR38341">
    <property type="entry name" value="FRUCTOSE-1,6-BISPHOSPHATE ALDOLASE/PHOSPHATASE"/>
    <property type="match status" value="1"/>
</dbReference>
<dbReference type="PANTHER" id="PTHR38341:SF1">
    <property type="entry name" value="FRUCTOSE-1,6-BISPHOSPHATE ALDOLASE_PHOSPHATASE"/>
    <property type="match status" value="1"/>
</dbReference>
<dbReference type="Pfam" id="PF01950">
    <property type="entry name" value="FBPase_3"/>
    <property type="match status" value="1"/>
</dbReference>
<dbReference type="PIRSF" id="PIRSF015647">
    <property type="entry name" value="FBPtase_archl"/>
    <property type="match status" value="1"/>
</dbReference>
<dbReference type="SUPFAM" id="SSF111249">
    <property type="entry name" value="Sulfolobus fructose-1,6-bisphosphatase-like"/>
    <property type="match status" value="1"/>
</dbReference>
<organism>
    <name type="scientific">Ignicoccus hospitalis (strain KIN4/I / DSM 18386 / JCM 14125)</name>
    <dbReference type="NCBI Taxonomy" id="453591"/>
    <lineage>
        <taxon>Archaea</taxon>
        <taxon>Thermoproteota</taxon>
        <taxon>Thermoprotei</taxon>
        <taxon>Desulfurococcales</taxon>
        <taxon>Desulfurococcaceae</taxon>
        <taxon>Ignicoccus</taxon>
    </lineage>
</organism>
<comment type="function">
    <text evidence="3">Catalyzes two subsequent steps in gluconeogenesis: the aldol condensation of dihydroxyacetone phosphate (DHAP) and glyceraldehyde-3-phosphate (GA3P) to fructose-1,6-bisphosphate (FBP), and the dephosphorylation of FBP to fructose-6-phosphate (F6P).</text>
</comment>
<comment type="catalytic activity">
    <reaction evidence="3">
        <text>beta-D-fructose 1,6-bisphosphate + H2O = beta-D-fructose 6-phosphate + phosphate</text>
        <dbReference type="Rhea" id="RHEA:11064"/>
        <dbReference type="ChEBI" id="CHEBI:15377"/>
        <dbReference type="ChEBI" id="CHEBI:32966"/>
        <dbReference type="ChEBI" id="CHEBI:43474"/>
        <dbReference type="ChEBI" id="CHEBI:57634"/>
        <dbReference type="EC" id="3.1.3.11"/>
    </reaction>
</comment>
<comment type="catalytic activity">
    <reaction evidence="3">
        <text>beta-D-fructose 1,6-bisphosphate = D-glyceraldehyde 3-phosphate + dihydroxyacetone phosphate</text>
        <dbReference type="Rhea" id="RHEA:14729"/>
        <dbReference type="ChEBI" id="CHEBI:32966"/>
        <dbReference type="ChEBI" id="CHEBI:57642"/>
        <dbReference type="ChEBI" id="CHEBI:59776"/>
        <dbReference type="EC" id="4.1.2.13"/>
    </reaction>
</comment>
<comment type="cofactor">
    <cofactor evidence="1">
        <name>Mg(2+)</name>
        <dbReference type="ChEBI" id="CHEBI:18420"/>
    </cofactor>
</comment>
<comment type="biophysicochemical properties">
    <kinetics>
        <KM evidence="3">0.02 mM for D-fructose 1,6-bisphosphate (when assaying the FBP phosphatase activity, at 48 degrees Celsius)</KM>
        <KM evidence="3">0.23 mM for triosephosphates (when assaying the FBP aldolase activity in the anabolic direction, at 48 degrees Celsius)</KM>
        <Vmax evidence="3">0.88 umol/min/mg enzyme for the FBP phosphatase activity (at 48 degrees Celsius)</Vmax>
        <Vmax evidence="3">0.54 umol/min/mg enzyme for the FBP aldolase activity (at 48 degrees Celsius)</Vmax>
    </kinetics>
    <phDependence>
        <text evidence="3">Optimum pH is 8.0 for FBP phosphatase activity and 7-8.5 for the FBP aldolase activity.</text>
    </phDependence>
    <temperatureDependence>
        <text evidence="3">Highly thermostable. Survives boiling for 1 hour.</text>
    </temperatureDependence>
</comment>
<comment type="pathway">
    <text evidence="6">Carbohydrate biosynthesis; gluconeogenesis.</text>
</comment>
<comment type="subunit">
    <text evidence="1">Homooctamer; dimer of tetramers.</text>
</comment>
<comment type="domain">
    <text evidence="1">Consists of a single catalytic domain, but remodels its active-site architecture via a large structural change to exhibit dual activities.</text>
</comment>
<comment type="similarity">
    <text evidence="2 5">Belongs to the FBP aldolase/phosphatase family.</text>
</comment>
<proteinExistence type="evidence at protein level"/>
<reference key="1">
    <citation type="journal article" date="2008" name="Genome Biol.">
        <title>A genomic analysis of the archaeal system Ignicoccus hospitalis-Nanoarchaeum equitans.</title>
        <authorList>
            <person name="Podar M."/>
            <person name="Anderson I."/>
            <person name="Makarova K.S."/>
            <person name="Elkins J.G."/>
            <person name="Ivanova N."/>
            <person name="Wall M.A."/>
            <person name="Lykidis A."/>
            <person name="Mavromatis K."/>
            <person name="Sun H."/>
            <person name="Hudson M.E."/>
            <person name="Chen W."/>
            <person name="Deciu C."/>
            <person name="Hutchison D."/>
            <person name="Eads J.R."/>
            <person name="Anderson A."/>
            <person name="Fernandes F."/>
            <person name="Szeto E."/>
            <person name="Lapidus A."/>
            <person name="Kyrpides N.C."/>
            <person name="Saier M.H. Jr."/>
            <person name="Richardson P.M."/>
            <person name="Rachel R."/>
            <person name="Huber H."/>
            <person name="Eisen J.A."/>
            <person name="Koonin E.V."/>
            <person name="Keller M."/>
            <person name="Stetter K.O."/>
        </authorList>
    </citation>
    <scope>NUCLEOTIDE SEQUENCE [LARGE SCALE GENOMIC DNA]</scope>
    <source>
        <strain>KIN4/I / DSM 18386 / JCM 14125</strain>
    </source>
</reference>
<reference key="2">
    <citation type="journal article" date="2010" name="Nature">
        <title>Fructose 1,6-bisphosphate aldolase/phosphatase may be an ancestral gluconeogenic enzyme.</title>
        <authorList>
            <person name="Say R.F."/>
            <person name="Fuchs G."/>
        </authorList>
    </citation>
    <scope>FUNCTION AS BOTH FBPASE AND FBP ALDOLASE</scope>
    <scope>CATALYTIC ACTIVITY</scope>
    <scope>BIOPHYSICOCHEMICAL PROPERTIES</scope>
    <scope>PATHWAY</scope>
    <source>
        <strain>KIN4/I / DSM 18386 / JCM 14125</strain>
    </source>
</reference>
<protein>
    <recommendedName>
        <fullName evidence="4">Fructose-1,6-bisphosphate aldolase/phosphatase</fullName>
        <shortName evidence="2">FBP A/P</shortName>
        <shortName evidence="4">FBP aldolase/phosphatase</shortName>
        <ecNumber evidence="3">3.1.3.11</ecNumber>
        <ecNumber evidence="3">4.1.2.13</ecNumber>
    </recommendedName>
</protein>
<gene>
    <name evidence="2" type="primary">fbp</name>
    <name evidence="7" type="ordered locus">Igni_0363</name>
</gene>
<sequence>MAQKTTISVIKADIGSLAGHHTVHPDCMAAASRVLAEAKKNGVINDFYVTHVGDDLILIMTHTKGVDHPDVHGLAWEAFKKAAEVAKELGLYAAGQDLLSDAFSGNVRGLGPAAAEMEIEERPSEPIVIFAADKTEPGAFNLPLYKIFADPFNTAGLVIDPRLHDGFVFEVVDVFEDKGVHLNTPEELYDLLALIGTPSRYVIRRVFRKDGKIAAVVSVERLNLIAGKYVGKDDPVMIVRAQSGFPAVGEVLEPFTFPHLVAGWMRGSHNGPLMPVPVRDARPTRFDGPPRVIALGFQVKNAKLVGPSDLFDDPAFDEARRTANKVADYIRRHGPFMPHRLDPSEMEYTTLPQVLERLKDRFKPVKDLPVPKVKHSEMLSGAEEAHD</sequence>
<name>FBPAP_IGNH4</name>
<evidence type="ECO:0000250" key="1">
    <source>
        <dbReference type="UniProtKB" id="F9VMT6"/>
    </source>
</evidence>
<evidence type="ECO:0000255" key="2">
    <source>
        <dbReference type="HAMAP-Rule" id="MF_02067"/>
    </source>
</evidence>
<evidence type="ECO:0000269" key="3">
    <source>
    </source>
</evidence>
<evidence type="ECO:0000303" key="4">
    <source>
    </source>
</evidence>
<evidence type="ECO:0000305" key="5"/>
<evidence type="ECO:0000305" key="6">
    <source>
    </source>
</evidence>
<evidence type="ECO:0000312" key="7">
    <source>
        <dbReference type="EMBL" id="ABU81546.1"/>
    </source>
</evidence>
<accession>A8A9E4</accession>
<keyword id="KW-0119">Carbohydrate metabolism</keyword>
<keyword id="KW-0312">Gluconeogenesis</keyword>
<keyword id="KW-0378">Hydrolase</keyword>
<keyword id="KW-0456">Lyase</keyword>
<keyword id="KW-0460">Magnesium</keyword>
<keyword id="KW-0479">Metal-binding</keyword>
<keyword id="KW-1185">Reference proteome</keyword>
<keyword id="KW-0704">Schiff base</keyword>